<organism>
    <name type="scientific">Ureaplasma urealyticum serovar 10 (strain ATCC 33699 / Western)</name>
    <dbReference type="NCBI Taxonomy" id="565575"/>
    <lineage>
        <taxon>Bacteria</taxon>
        <taxon>Bacillati</taxon>
        <taxon>Mycoplasmatota</taxon>
        <taxon>Mycoplasmoidales</taxon>
        <taxon>Mycoplasmoidaceae</taxon>
        <taxon>Ureaplasma</taxon>
    </lineage>
</organism>
<feature type="chain" id="PRO_1000101080" description="Large ribosomal subunit protein bL36">
    <location>
        <begin position="1"/>
        <end position="37"/>
    </location>
</feature>
<comment type="similarity">
    <text evidence="1">Belongs to the bacterial ribosomal protein bL36 family.</text>
</comment>
<proteinExistence type="inferred from homology"/>
<reference key="1">
    <citation type="submission" date="2008-10" db="EMBL/GenBank/DDBJ databases">
        <title>Genome sequence of Ureaplasma urealyticum serovar 10 ATCC-33699.</title>
        <authorList>
            <person name="Shrivastava S."/>
            <person name="Methe B.A."/>
            <person name="Glass J."/>
            <person name="White K."/>
            <person name="Duffy L.B."/>
        </authorList>
    </citation>
    <scope>NUCLEOTIDE SEQUENCE [LARGE SCALE GENOMIC DNA]</scope>
    <source>
        <strain>ATCC 33699 / Western</strain>
    </source>
</reference>
<keyword id="KW-0687">Ribonucleoprotein</keyword>
<keyword id="KW-0689">Ribosomal protein</keyword>
<dbReference type="EMBL" id="CP001184">
    <property type="protein sequence ID" value="ACI60323.1"/>
    <property type="molecule type" value="Genomic_DNA"/>
</dbReference>
<dbReference type="RefSeq" id="WP_004025773.1">
    <property type="nucleotide sequence ID" value="NC_011374.1"/>
</dbReference>
<dbReference type="SMR" id="B5ZB63"/>
<dbReference type="STRING" id="565575.UUR10_0249"/>
<dbReference type="GeneID" id="93848729"/>
<dbReference type="KEGG" id="uue:UUR10_0249"/>
<dbReference type="eggNOG" id="COG0257">
    <property type="taxonomic scope" value="Bacteria"/>
</dbReference>
<dbReference type="HOGENOM" id="CLU_135723_6_2_14"/>
<dbReference type="OrthoDB" id="9802520at2"/>
<dbReference type="Proteomes" id="UP000002018">
    <property type="component" value="Chromosome"/>
</dbReference>
<dbReference type="GO" id="GO:0005737">
    <property type="term" value="C:cytoplasm"/>
    <property type="evidence" value="ECO:0007669"/>
    <property type="project" value="UniProtKB-ARBA"/>
</dbReference>
<dbReference type="GO" id="GO:1990904">
    <property type="term" value="C:ribonucleoprotein complex"/>
    <property type="evidence" value="ECO:0007669"/>
    <property type="project" value="UniProtKB-KW"/>
</dbReference>
<dbReference type="GO" id="GO:0005840">
    <property type="term" value="C:ribosome"/>
    <property type="evidence" value="ECO:0007669"/>
    <property type="project" value="UniProtKB-KW"/>
</dbReference>
<dbReference type="GO" id="GO:0003735">
    <property type="term" value="F:structural constituent of ribosome"/>
    <property type="evidence" value="ECO:0007669"/>
    <property type="project" value="InterPro"/>
</dbReference>
<dbReference type="GO" id="GO:0006412">
    <property type="term" value="P:translation"/>
    <property type="evidence" value="ECO:0007669"/>
    <property type="project" value="UniProtKB-UniRule"/>
</dbReference>
<dbReference type="HAMAP" id="MF_00251">
    <property type="entry name" value="Ribosomal_bL36"/>
    <property type="match status" value="1"/>
</dbReference>
<dbReference type="InterPro" id="IPR000473">
    <property type="entry name" value="Ribosomal_bL36"/>
</dbReference>
<dbReference type="InterPro" id="IPR035977">
    <property type="entry name" value="Ribosomal_bL36_sp"/>
</dbReference>
<dbReference type="NCBIfam" id="TIGR01022">
    <property type="entry name" value="rpmJ_bact"/>
    <property type="match status" value="1"/>
</dbReference>
<dbReference type="PANTHER" id="PTHR42888">
    <property type="entry name" value="50S RIBOSOMAL PROTEIN L36, CHLOROPLASTIC"/>
    <property type="match status" value="1"/>
</dbReference>
<dbReference type="PANTHER" id="PTHR42888:SF1">
    <property type="entry name" value="LARGE RIBOSOMAL SUBUNIT PROTEIN BL36C"/>
    <property type="match status" value="1"/>
</dbReference>
<dbReference type="Pfam" id="PF00444">
    <property type="entry name" value="Ribosomal_L36"/>
    <property type="match status" value="1"/>
</dbReference>
<dbReference type="SUPFAM" id="SSF57840">
    <property type="entry name" value="Ribosomal protein L36"/>
    <property type="match status" value="1"/>
</dbReference>
<dbReference type="PROSITE" id="PS00828">
    <property type="entry name" value="RIBOSOMAL_L36"/>
    <property type="match status" value="1"/>
</dbReference>
<sequence length="37" mass="4136">MKVRASVKAICKDCKIVKRSGVVRVICANPKHKQRQG</sequence>
<evidence type="ECO:0000255" key="1">
    <source>
        <dbReference type="HAMAP-Rule" id="MF_00251"/>
    </source>
</evidence>
<evidence type="ECO:0000305" key="2"/>
<name>RL36_UREU1</name>
<accession>B5ZB63</accession>
<gene>
    <name evidence="1" type="primary">rpmJ</name>
    <name type="ordered locus">UUR10_0249</name>
</gene>
<protein>
    <recommendedName>
        <fullName evidence="1">Large ribosomal subunit protein bL36</fullName>
    </recommendedName>
    <alternativeName>
        <fullName evidence="2">50S ribosomal protein L36</fullName>
    </alternativeName>
</protein>